<dbReference type="EMBL" id="U30387">
    <property type="protein sequence ID" value="AAA82608.1"/>
    <property type="molecule type" value="Genomic_DNA"/>
</dbReference>
<dbReference type="EMBL" id="CP001829">
    <property type="protein sequence ID" value="ADL10720.1"/>
    <property type="molecule type" value="Genomic_DNA"/>
</dbReference>
<dbReference type="RefSeq" id="WP_013242109.1">
    <property type="nucleotide sequence ID" value="NC_017301.2"/>
</dbReference>
<dbReference type="SMR" id="P48288"/>
<dbReference type="STRING" id="681645.CpC231_1246"/>
<dbReference type="GeneID" id="93974399"/>
<dbReference type="KEGG" id="cpq:CPC231_06325"/>
<dbReference type="PATRIC" id="fig|681645.3.peg.1305"/>
<dbReference type="eggNOG" id="COG0468">
    <property type="taxonomic scope" value="Bacteria"/>
</dbReference>
<dbReference type="HOGENOM" id="CLU_040469_3_2_11"/>
<dbReference type="OrthoDB" id="9776733at2"/>
<dbReference type="Proteomes" id="UP000000276">
    <property type="component" value="Chromosome"/>
</dbReference>
<dbReference type="GO" id="GO:0005829">
    <property type="term" value="C:cytosol"/>
    <property type="evidence" value="ECO:0007669"/>
    <property type="project" value="TreeGrafter"/>
</dbReference>
<dbReference type="GO" id="GO:0005524">
    <property type="term" value="F:ATP binding"/>
    <property type="evidence" value="ECO:0007669"/>
    <property type="project" value="UniProtKB-UniRule"/>
</dbReference>
<dbReference type="GO" id="GO:0016887">
    <property type="term" value="F:ATP hydrolysis activity"/>
    <property type="evidence" value="ECO:0007669"/>
    <property type="project" value="InterPro"/>
</dbReference>
<dbReference type="GO" id="GO:0140664">
    <property type="term" value="F:ATP-dependent DNA damage sensor activity"/>
    <property type="evidence" value="ECO:0007669"/>
    <property type="project" value="InterPro"/>
</dbReference>
<dbReference type="GO" id="GO:0003684">
    <property type="term" value="F:damaged DNA binding"/>
    <property type="evidence" value="ECO:0007669"/>
    <property type="project" value="UniProtKB-UniRule"/>
</dbReference>
<dbReference type="GO" id="GO:0003697">
    <property type="term" value="F:single-stranded DNA binding"/>
    <property type="evidence" value="ECO:0007669"/>
    <property type="project" value="UniProtKB-UniRule"/>
</dbReference>
<dbReference type="GO" id="GO:0006310">
    <property type="term" value="P:DNA recombination"/>
    <property type="evidence" value="ECO:0007669"/>
    <property type="project" value="UniProtKB-UniRule"/>
</dbReference>
<dbReference type="GO" id="GO:0006281">
    <property type="term" value="P:DNA repair"/>
    <property type="evidence" value="ECO:0007669"/>
    <property type="project" value="UniProtKB-UniRule"/>
</dbReference>
<dbReference type="GO" id="GO:0009432">
    <property type="term" value="P:SOS response"/>
    <property type="evidence" value="ECO:0007669"/>
    <property type="project" value="UniProtKB-UniRule"/>
</dbReference>
<dbReference type="CDD" id="cd00983">
    <property type="entry name" value="RecA"/>
    <property type="match status" value="1"/>
</dbReference>
<dbReference type="FunFam" id="3.40.50.300:FF:000087">
    <property type="entry name" value="Recombinase RecA"/>
    <property type="match status" value="1"/>
</dbReference>
<dbReference type="Gene3D" id="3.40.50.300">
    <property type="entry name" value="P-loop containing nucleotide triphosphate hydrolases"/>
    <property type="match status" value="1"/>
</dbReference>
<dbReference type="HAMAP" id="MF_00268">
    <property type="entry name" value="RecA"/>
    <property type="match status" value="1"/>
</dbReference>
<dbReference type="InterPro" id="IPR003593">
    <property type="entry name" value="AAA+_ATPase"/>
</dbReference>
<dbReference type="InterPro" id="IPR013765">
    <property type="entry name" value="DNA_recomb/repair_RecA"/>
</dbReference>
<dbReference type="InterPro" id="IPR020584">
    <property type="entry name" value="DNA_recomb/repair_RecA_CS"/>
</dbReference>
<dbReference type="InterPro" id="IPR027417">
    <property type="entry name" value="P-loop_NTPase"/>
</dbReference>
<dbReference type="InterPro" id="IPR049261">
    <property type="entry name" value="RecA-like_C"/>
</dbReference>
<dbReference type="InterPro" id="IPR049428">
    <property type="entry name" value="RecA-like_N"/>
</dbReference>
<dbReference type="InterPro" id="IPR020588">
    <property type="entry name" value="RecA_ATP-bd"/>
</dbReference>
<dbReference type="InterPro" id="IPR023400">
    <property type="entry name" value="RecA_C_sf"/>
</dbReference>
<dbReference type="InterPro" id="IPR020587">
    <property type="entry name" value="RecA_monomer-monomer_interface"/>
</dbReference>
<dbReference type="NCBIfam" id="TIGR02012">
    <property type="entry name" value="tigrfam_recA"/>
    <property type="match status" value="1"/>
</dbReference>
<dbReference type="PANTHER" id="PTHR45900:SF1">
    <property type="entry name" value="MITOCHONDRIAL DNA REPAIR PROTEIN RECA HOMOLOG-RELATED"/>
    <property type="match status" value="1"/>
</dbReference>
<dbReference type="PANTHER" id="PTHR45900">
    <property type="entry name" value="RECA"/>
    <property type="match status" value="1"/>
</dbReference>
<dbReference type="Pfam" id="PF00154">
    <property type="entry name" value="RecA"/>
    <property type="match status" value="1"/>
</dbReference>
<dbReference type="Pfam" id="PF21096">
    <property type="entry name" value="RecA_C"/>
    <property type="match status" value="1"/>
</dbReference>
<dbReference type="PRINTS" id="PR00142">
    <property type="entry name" value="RECA"/>
</dbReference>
<dbReference type="SMART" id="SM00382">
    <property type="entry name" value="AAA"/>
    <property type="match status" value="1"/>
</dbReference>
<dbReference type="SUPFAM" id="SSF52540">
    <property type="entry name" value="P-loop containing nucleoside triphosphate hydrolases"/>
    <property type="match status" value="1"/>
</dbReference>
<dbReference type="SUPFAM" id="SSF54752">
    <property type="entry name" value="RecA protein, C-terminal domain"/>
    <property type="match status" value="1"/>
</dbReference>
<dbReference type="PROSITE" id="PS00321">
    <property type="entry name" value="RECA_1"/>
    <property type="match status" value="1"/>
</dbReference>
<dbReference type="PROSITE" id="PS50162">
    <property type="entry name" value="RECA_2"/>
    <property type="match status" value="1"/>
</dbReference>
<dbReference type="PROSITE" id="PS50163">
    <property type="entry name" value="RECA_3"/>
    <property type="match status" value="1"/>
</dbReference>
<keyword id="KW-0067">ATP-binding</keyword>
<keyword id="KW-0963">Cytoplasm</keyword>
<keyword id="KW-0227">DNA damage</keyword>
<keyword id="KW-0233">DNA recombination</keyword>
<keyword id="KW-0234">DNA repair</keyword>
<keyword id="KW-0238">DNA-binding</keyword>
<keyword id="KW-0547">Nucleotide-binding</keyword>
<keyword id="KW-1185">Reference proteome</keyword>
<keyword id="KW-0742">SOS response</keyword>
<protein>
    <recommendedName>
        <fullName evidence="1">Protein RecA</fullName>
    </recommendedName>
    <alternativeName>
        <fullName evidence="1">Recombinase A</fullName>
    </alternativeName>
</protein>
<gene>
    <name evidence="1" type="primary">recA</name>
    <name type="ordered locus">CpC231_1246</name>
</gene>
<comment type="function">
    <text evidence="1">Can catalyze the hydrolysis of ATP in the presence of single-stranded DNA, the ATP-dependent uptake of single-stranded DNA by duplex DNA, and the ATP-dependent hybridization of homologous single-stranded DNAs. It interacts with LexA causing its activation and leading to its autocatalytic cleavage.</text>
</comment>
<comment type="subcellular location">
    <subcellularLocation>
        <location evidence="1">Cytoplasm</location>
    </subcellularLocation>
</comment>
<comment type="similarity">
    <text evidence="1">Belongs to the RecA family.</text>
</comment>
<sequence>MAAKKNSKSQPATGDNRQKALDAALAMIEKDFGKGAVMRLGDDNRPPISAISSGNTAIDVALGIGGFPKGRIVEVYGPESSGKTTVALHAIAQAQRAGGIAAFIDAEHALDPDYARKLGVDTDALLVSQPDTGEQALEIADMLVRSGAIDIIVIDSVAALTPKAEIEGEMGDSHVGLQARLMSQALRKMTGALYNSGTTAIFINQLREKIGVMFGSPETTTGGKALKFYASVRCDVRRIQTLKDGQDAIGNRTRLKVVKNKVSPPFKIAEFDIMYGEGISRESSIIDLGVDNGIIKKSGSWFTYDGDQLGQGKEKVRLYLKQTPELADEIEEKIFRALQIGKYANQNDALTDDPVDMVPNIDFDDEDNG</sequence>
<name>RECA_CORP2</name>
<organism>
    <name type="scientific">Corynebacterium pseudotuberculosis (strain C231)</name>
    <dbReference type="NCBI Taxonomy" id="681645"/>
    <lineage>
        <taxon>Bacteria</taxon>
        <taxon>Bacillati</taxon>
        <taxon>Actinomycetota</taxon>
        <taxon>Actinomycetes</taxon>
        <taxon>Mycobacteriales</taxon>
        <taxon>Corynebacteriaceae</taxon>
        <taxon>Corynebacterium</taxon>
    </lineage>
</organism>
<evidence type="ECO:0000255" key="1">
    <source>
        <dbReference type="HAMAP-Rule" id="MF_00268"/>
    </source>
</evidence>
<proteinExistence type="inferred from homology"/>
<reference key="1">
    <citation type="journal article" date="1996" name="FEMS Microbiol. Lett.">
        <title>Cloning and manipulation of the Corynebacterium pseudotuberculosis recA gene for live vaccine vector development.</title>
        <authorList>
            <person name="Pogson C.A."/>
            <person name="Simmons C.P."/>
            <person name="Strugnell R.A."/>
            <person name="Hodgson A.L.M."/>
        </authorList>
    </citation>
    <scope>NUCLEOTIDE SEQUENCE [GENOMIC DNA]</scope>
    <source>
        <strain>C231</strain>
    </source>
</reference>
<reference key="2">
    <citation type="journal article" date="2011" name="PLoS ONE">
        <title>Evidence for reductive genome evolution and lateral acquisition of virulence functions in two Corynebacterium pseudotuberculosis strains.</title>
        <authorList>
            <person name="Ruiz J.C."/>
            <person name="D'Afonseca V."/>
            <person name="Silva A."/>
            <person name="Ali A."/>
            <person name="Pinto A.C."/>
            <person name="Santos A.R."/>
            <person name="Rocha A.A."/>
            <person name="Lopes D.O."/>
            <person name="Dorella F.A."/>
            <person name="Pacheco L.G."/>
            <person name="Costa M.P."/>
            <person name="Turk M.Z."/>
            <person name="Seyffert N."/>
            <person name="Moraes P.M."/>
            <person name="Soares S.C."/>
            <person name="Almeida S.S."/>
            <person name="Castro T.L."/>
            <person name="Abreu V.A."/>
            <person name="Trost E."/>
            <person name="Baumbach J."/>
            <person name="Tauch A."/>
            <person name="Schneider M.P."/>
            <person name="McCulloch J."/>
            <person name="Cerdeira L.T."/>
            <person name="Ramos R.T."/>
            <person name="Zerlotini A."/>
            <person name="Dominitini A."/>
            <person name="Resende D.M."/>
            <person name="Coser E.M."/>
            <person name="Oliveira L.M."/>
            <person name="Pedrosa A.L."/>
            <person name="Vieira C.U."/>
            <person name="Guimaraes C.T."/>
            <person name="Bartholomeu D.C."/>
            <person name="Oliveira D.M."/>
            <person name="Santos F.R."/>
            <person name="Rabelo E.M."/>
            <person name="Lobo F.P."/>
            <person name="Franco G.R."/>
            <person name="Costa A.F."/>
            <person name="Castro I.M."/>
            <person name="Dias S.R."/>
            <person name="Ferro J.A."/>
            <person name="Ortega J.M."/>
            <person name="Paiva L.V."/>
            <person name="Goulart L.R."/>
            <person name="Almeida J.F."/>
            <person name="Ferro M.I."/>
            <person name="Carneiro N.P."/>
            <person name="Falcao P.R."/>
            <person name="Grynberg P."/>
            <person name="Teixeira S.M."/>
            <person name="Brommonschenkel S."/>
            <person name="Oliveira S.C."/>
            <person name="Meyer R."/>
            <person name="Moore R.J."/>
            <person name="Miyoshi A."/>
            <person name="Oliveira G.C."/>
            <person name="Azevedo V."/>
        </authorList>
    </citation>
    <scope>NUCLEOTIDE SEQUENCE [LARGE SCALE GENOMIC DNA]</scope>
    <source>
        <strain>C231</strain>
    </source>
</reference>
<feature type="chain" id="PRO_0000122698" description="Protein RecA">
    <location>
        <begin position="1"/>
        <end position="369"/>
    </location>
</feature>
<feature type="binding site" evidence="1">
    <location>
        <begin position="77"/>
        <end position="84"/>
    </location>
    <ligand>
        <name>ATP</name>
        <dbReference type="ChEBI" id="CHEBI:30616"/>
    </ligand>
</feature>
<accession>P48288</accession>
<accession>D9QAZ4</accession>